<proteinExistence type="inferred from homology"/>
<name>DNAK_BACMK</name>
<reference key="1">
    <citation type="journal article" date="2008" name="Chem. Biol. Interact.">
        <title>Extending the Bacillus cereus group genomics to putative food-borne pathogens of different toxicity.</title>
        <authorList>
            <person name="Lapidus A."/>
            <person name="Goltsman E."/>
            <person name="Auger S."/>
            <person name="Galleron N."/>
            <person name="Segurens B."/>
            <person name="Dossat C."/>
            <person name="Land M.L."/>
            <person name="Broussolle V."/>
            <person name="Brillard J."/>
            <person name="Guinebretiere M.-H."/>
            <person name="Sanchis V."/>
            <person name="Nguen-the C."/>
            <person name="Lereclus D."/>
            <person name="Richardson P."/>
            <person name="Wincker P."/>
            <person name="Weissenbach J."/>
            <person name="Ehrlich S.D."/>
            <person name="Sorokin A."/>
        </authorList>
    </citation>
    <scope>NUCLEOTIDE SEQUENCE [LARGE SCALE GENOMIC DNA]</scope>
    <source>
        <strain>KBAB4</strain>
    </source>
</reference>
<sequence>MSKIIGIDLGTTNSCVAVMEGGEPKVIPNPEGNRTTPSVVAFKNEERQVGEVAKRQAITNPNTIMSVKRHMGTDYKVEVEGKDFTPQEISAIILQNLKASAEAYLGETVTKAVITVPAYFNDAERQATKDAGRIAGLEVERIINEPTAAALAYGLEKQDEEQKILVYDLGGGTFDVSILELADGTFEVISTAGDNRLGGDDFDQVIIDHLVAEFKKENSIDLSQDKMALQRLKDAAEKAKKDLSGVTQTQISLPFISAGAAGPLHLELTLTRAKFEEISAGLVERTLEPTRRALKDAGFAPSELDKVILVGGSTRIPAVQEAIKRETGKEPYKGVNPDEVVALGAAVQGGVLTGDVEGVLLLDVTPLSLGIETMGGVFTKLIERNTTIPTSKSQVFSTAADNQPAVDIHVLQGERPMSADNKTLGRFQLTDLPPAPRGIPQIEVTFDIDANGIVNVRAKDLGTSKEQTITIQSSSGLSDEEVDRMVQEAESNADADQKRKEEVELRNEADQLVFQTDKVVKDLEGKVDAAEVAKATEAKEALQAAIEKNELEEIRVKKDALQEIVQQLTVKLYEQAQAAAGQAEGAQGAQDAGAKKDNVVDAEFEEVKEDK</sequence>
<evidence type="ECO:0000255" key="1">
    <source>
        <dbReference type="HAMAP-Rule" id="MF_00332"/>
    </source>
</evidence>
<evidence type="ECO:0000256" key="2">
    <source>
        <dbReference type="SAM" id="MobiDB-lite"/>
    </source>
</evidence>
<gene>
    <name evidence="1" type="primary">dnaK</name>
    <name type="ordered locus">BcerKBAB4_4165</name>
</gene>
<keyword id="KW-0067">ATP-binding</keyword>
<keyword id="KW-0143">Chaperone</keyword>
<keyword id="KW-0547">Nucleotide-binding</keyword>
<keyword id="KW-0597">Phosphoprotein</keyword>
<keyword id="KW-0346">Stress response</keyword>
<accession>A9VHU1</accession>
<protein>
    <recommendedName>
        <fullName evidence="1">Chaperone protein DnaK</fullName>
    </recommendedName>
    <alternativeName>
        <fullName evidence="1">HSP70</fullName>
    </alternativeName>
    <alternativeName>
        <fullName evidence="1">Heat shock 70 kDa protein</fullName>
    </alternativeName>
    <alternativeName>
        <fullName evidence="1">Heat shock protein 70</fullName>
    </alternativeName>
</protein>
<comment type="function">
    <text evidence="1">Acts as a chaperone.</text>
</comment>
<comment type="induction">
    <text evidence="1">By stress conditions e.g. heat shock.</text>
</comment>
<comment type="similarity">
    <text evidence="1">Belongs to the heat shock protein 70 family.</text>
</comment>
<organism>
    <name type="scientific">Bacillus mycoides (strain KBAB4)</name>
    <name type="common">Bacillus weihenstephanensis</name>
    <dbReference type="NCBI Taxonomy" id="315730"/>
    <lineage>
        <taxon>Bacteria</taxon>
        <taxon>Bacillati</taxon>
        <taxon>Bacillota</taxon>
        <taxon>Bacilli</taxon>
        <taxon>Bacillales</taxon>
        <taxon>Bacillaceae</taxon>
        <taxon>Bacillus</taxon>
        <taxon>Bacillus cereus group</taxon>
    </lineage>
</organism>
<dbReference type="EMBL" id="CP000903">
    <property type="protein sequence ID" value="ABY45326.1"/>
    <property type="molecule type" value="Genomic_DNA"/>
</dbReference>
<dbReference type="RefSeq" id="WP_002015198.1">
    <property type="nucleotide sequence ID" value="NC_010184.1"/>
</dbReference>
<dbReference type="SMR" id="A9VHU1"/>
<dbReference type="GeneID" id="66266111"/>
<dbReference type="KEGG" id="bwe:BcerKBAB4_4165"/>
<dbReference type="eggNOG" id="COG0443">
    <property type="taxonomic scope" value="Bacteria"/>
</dbReference>
<dbReference type="HOGENOM" id="CLU_005965_2_4_9"/>
<dbReference type="Proteomes" id="UP000002154">
    <property type="component" value="Chromosome"/>
</dbReference>
<dbReference type="GO" id="GO:0005524">
    <property type="term" value="F:ATP binding"/>
    <property type="evidence" value="ECO:0007669"/>
    <property type="project" value="UniProtKB-UniRule"/>
</dbReference>
<dbReference type="GO" id="GO:0140662">
    <property type="term" value="F:ATP-dependent protein folding chaperone"/>
    <property type="evidence" value="ECO:0007669"/>
    <property type="project" value="InterPro"/>
</dbReference>
<dbReference type="GO" id="GO:0051082">
    <property type="term" value="F:unfolded protein binding"/>
    <property type="evidence" value="ECO:0007669"/>
    <property type="project" value="InterPro"/>
</dbReference>
<dbReference type="CDD" id="cd10234">
    <property type="entry name" value="ASKHA_NBD_HSP70_DnaK-like"/>
    <property type="match status" value="1"/>
</dbReference>
<dbReference type="FunFam" id="2.60.34.10:FF:000014">
    <property type="entry name" value="Chaperone protein DnaK HSP70"/>
    <property type="match status" value="1"/>
</dbReference>
<dbReference type="FunFam" id="1.20.1270.10:FF:000004">
    <property type="entry name" value="Molecular chaperone DnaK"/>
    <property type="match status" value="1"/>
</dbReference>
<dbReference type="FunFam" id="3.30.420.40:FF:000071">
    <property type="entry name" value="Molecular chaperone DnaK"/>
    <property type="match status" value="1"/>
</dbReference>
<dbReference type="FunFam" id="3.90.640.10:FF:000003">
    <property type="entry name" value="Molecular chaperone DnaK"/>
    <property type="match status" value="1"/>
</dbReference>
<dbReference type="Gene3D" id="1.20.1270.10">
    <property type="match status" value="1"/>
</dbReference>
<dbReference type="Gene3D" id="3.30.420.40">
    <property type="match status" value="2"/>
</dbReference>
<dbReference type="Gene3D" id="3.90.640.10">
    <property type="entry name" value="Actin, Chain A, domain 4"/>
    <property type="match status" value="1"/>
</dbReference>
<dbReference type="Gene3D" id="2.60.34.10">
    <property type="entry name" value="Substrate Binding Domain Of DNAk, Chain A, domain 1"/>
    <property type="match status" value="1"/>
</dbReference>
<dbReference type="HAMAP" id="MF_00332">
    <property type="entry name" value="DnaK"/>
    <property type="match status" value="1"/>
</dbReference>
<dbReference type="InterPro" id="IPR043129">
    <property type="entry name" value="ATPase_NBD"/>
</dbReference>
<dbReference type="InterPro" id="IPR012725">
    <property type="entry name" value="Chaperone_DnaK"/>
</dbReference>
<dbReference type="InterPro" id="IPR018181">
    <property type="entry name" value="Heat_shock_70_CS"/>
</dbReference>
<dbReference type="InterPro" id="IPR029048">
    <property type="entry name" value="HSP70_C_sf"/>
</dbReference>
<dbReference type="InterPro" id="IPR029047">
    <property type="entry name" value="HSP70_peptide-bd_sf"/>
</dbReference>
<dbReference type="InterPro" id="IPR013126">
    <property type="entry name" value="Hsp_70_fam"/>
</dbReference>
<dbReference type="NCBIfam" id="NF001413">
    <property type="entry name" value="PRK00290.1"/>
    <property type="match status" value="1"/>
</dbReference>
<dbReference type="NCBIfam" id="TIGR02350">
    <property type="entry name" value="prok_dnaK"/>
    <property type="match status" value="1"/>
</dbReference>
<dbReference type="PANTHER" id="PTHR19375">
    <property type="entry name" value="HEAT SHOCK PROTEIN 70KDA"/>
    <property type="match status" value="1"/>
</dbReference>
<dbReference type="Pfam" id="PF00012">
    <property type="entry name" value="HSP70"/>
    <property type="match status" value="1"/>
</dbReference>
<dbReference type="PRINTS" id="PR00301">
    <property type="entry name" value="HEATSHOCK70"/>
</dbReference>
<dbReference type="SUPFAM" id="SSF53067">
    <property type="entry name" value="Actin-like ATPase domain"/>
    <property type="match status" value="2"/>
</dbReference>
<dbReference type="SUPFAM" id="SSF100934">
    <property type="entry name" value="Heat shock protein 70kD (HSP70), C-terminal subdomain"/>
    <property type="match status" value="1"/>
</dbReference>
<dbReference type="SUPFAM" id="SSF100920">
    <property type="entry name" value="Heat shock protein 70kD (HSP70), peptide-binding domain"/>
    <property type="match status" value="1"/>
</dbReference>
<dbReference type="PROSITE" id="PS00297">
    <property type="entry name" value="HSP70_1"/>
    <property type="match status" value="1"/>
</dbReference>
<dbReference type="PROSITE" id="PS00329">
    <property type="entry name" value="HSP70_2"/>
    <property type="match status" value="1"/>
</dbReference>
<dbReference type="PROSITE" id="PS01036">
    <property type="entry name" value="HSP70_3"/>
    <property type="match status" value="1"/>
</dbReference>
<feature type="chain" id="PRO_1000119669" description="Chaperone protein DnaK">
    <location>
        <begin position="1"/>
        <end position="611"/>
    </location>
</feature>
<feature type="region of interest" description="Disordered" evidence="2">
    <location>
        <begin position="579"/>
        <end position="611"/>
    </location>
</feature>
<feature type="compositionally biased region" description="Low complexity" evidence="2">
    <location>
        <begin position="579"/>
        <end position="592"/>
    </location>
</feature>
<feature type="compositionally biased region" description="Acidic residues" evidence="2">
    <location>
        <begin position="600"/>
        <end position="611"/>
    </location>
</feature>
<feature type="modified residue" description="Phosphothreonine; by autocatalysis" evidence="1">
    <location>
        <position position="173"/>
    </location>
</feature>